<proteinExistence type="evidence at transcript level"/>
<feature type="initiator methionine" description="Removed" evidence="3">
    <location>
        <position position="1"/>
    </location>
</feature>
<feature type="chain" id="PRO_0000086759" description="Serine/threonine-protein kinase TNNI3K">
    <location>
        <begin position="2"/>
        <end position="618"/>
    </location>
</feature>
<feature type="repeat" description="ANK 1">
    <location>
        <begin position="66"/>
        <end position="96"/>
    </location>
</feature>
<feature type="repeat" description="ANK 2">
    <location>
        <begin position="100"/>
        <end position="129"/>
    </location>
</feature>
<feature type="repeat" description="ANK 3">
    <location>
        <begin position="133"/>
        <end position="162"/>
    </location>
</feature>
<feature type="repeat" description="ANK 4">
    <location>
        <begin position="166"/>
        <end position="195"/>
    </location>
</feature>
<feature type="repeat" description="ANK 5">
    <location>
        <begin position="199"/>
        <end position="228"/>
    </location>
</feature>
<feature type="repeat" description="ANK 6">
    <location>
        <begin position="234"/>
        <end position="263"/>
    </location>
</feature>
<feature type="repeat" description="ANK 7">
    <location>
        <begin position="269"/>
        <end position="298"/>
    </location>
</feature>
<feature type="repeat" description="ANK 8">
    <location>
        <begin position="304"/>
        <end position="335"/>
    </location>
</feature>
<feature type="repeat" description="ANK 9">
    <location>
        <begin position="339"/>
        <end position="368"/>
    </location>
</feature>
<feature type="repeat" description="ANK 10">
    <location>
        <begin position="381"/>
        <end position="410"/>
    </location>
</feature>
<feature type="domain" description="Protein kinase" evidence="4">
    <location>
        <begin position="463"/>
        <end position="618"/>
    </location>
</feature>
<feature type="coiled-coil region" evidence="3">
    <location>
        <begin position="21"/>
        <end position="51"/>
    </location>
</feature>
<feature type="active site" description="Proton acceptor" evidence="4">
    <location>
        <position position="588"/>
    </location>
</feature>
<feature type="binding site" evidence="4">
    <location>
        <begin position="469"/>
        <end position="477"/>
    </location>
    <ligand>
        <name>ATP</name>
        <dbReference type="ChEBI" id="CHEBI:30616"/>
    </ligand>
</feature>
<feature type="binding site" evidence="4">
    <location>
        <position position="490"/>
    </location>
    <ligand>
        <name>ATP</name>
        <dbReference type="ChEBI" id="CHEBI:30616"/>
    </ligand>
</feature>
<feature type="lipid moiety-binding region" description="N-myristoyl glycine" evidence="3">
    <location>
        <position position="2"/>
    </location>
</feature>
<dbReference type="EC" id="2.7.11.1"/>
<dbReference type="EMBL" id="CR857346">
    <property type="protein sequence ID" value="CAH89642.1"/>
    <property type="molecule type" value="mRNA"/>
</dbReference>
<dbReference type="RefSeq" id="NP_001127180.2">
    <property type="nucleotide sequence ID" value="NM_001133708.2"/>
</dbReference>
<dbReference type="SMR" id="Q5RF15"/>
<dbReference type="STRING" id="9601.ENSPPYP00000001439"/>
<dbReference type="eggNOG" id="KOG0192">
    <property type="taxonomic scope" value="Eukaryota"/>
</dbReference>
<dbReference type="InParanoid" id="Q5RF15"/>
<dbReference type="Proteomes" id="UP000001595">
    <property type="component" value="Unplaced"/>
</dbReference>
<dbReference type="GO" id="GO:0005737">
    <property type="term" value="C:cytoplasm"/>
    <property type="evidence" value="ECO:0007669"/>
    <property type="project" value="UniProtKB-SubCell"/>
</dbReference>
<dbReference type="GO" id="GO:0005634">
    <property type="term" value="C:nucleus"/>
    <property type="evidence" value="ECO:0007669"/>
    <property type="project" value="UniProtKB-SubCell"/>
</dbReference>
<dbReference type="GO" id="GO:0005524">
    <property type="term" value="F:ATP binding"/>
    <property type="evidence" value="ECO:0007669"/>
    <property type="project" value="UniProtKB-KW"/>
</dbReference>
<dbReference type="GO" id="GO:0046872">
    <property type="term" value="F:metal ion binding"/>
    <property type="evidence" value="ECO:0007669"/>
    <property type="project" value="UniProtKB-KW"/>
</dbReference>
<dbReference type="GO" id="GO:0106310">
    <property type="term" value="F:protein serine kinase activity"/>
    <property type="evidence" value="ECO:0007669"/>
    <property type="project" value="RHEA"/>
</dbReference>
<dbReference type="GO" id="GO:0004674">
    <property type="term" value="F:protein serine/threonine kinase activity"/>
    <property type="evidence" value="ECO:0007669"/>
    <property type="project" value="UniProtKB-KW"/>
</dbReference>
<dbReference type="FunFam" id="1.25.40.20:FF:000077">
    <property type="entry name" value="Serine/threonine-protein kinase TNNI3K"/>
    <property type="match status" value="1"/>
</dbReference>
<dbReference type="FunFam" id="1.25.40.20:FF:000155">
    <property type="entry name" value="Serine/threonine-protein kinase TNNI3K"/>
    <property type="match status" value="1"/>
</dbReference>
<dbReference type="FunFam" id="1.25.40.20:FF:000089">
    <property type="entry name" value="serine/threonine-protein kinase TNNI3K"/>
    <property type="match status" value="1"/>
</dbReference>
<dbReference type="Gene3D" id="1.25.40.20">
    <property type="entry name" value="Ankyrin repeat-containing domain"/>
    <property type="match status" value="3"/>
</dbReference>
<dbReference type="Gene3D" id="1.10.510.10">
    <property type="entry name" value="Transferase(Phosphotransferase) domain 1"/>
    <property type="match status" value="1"/>
</dbReference>
<dbReference type="InterPro" id="IPR002110">
    <property type="entry name" value="Ankyrin_rpt"/>
</dbReference>
<dbReference type="InterPro" id="IPR036770">
    <property type="entry name" value="Ankyrin_rpt-contain_sf"/>
</dbReference>
<dbReference type="InterPro" id="IPR011009">
    <property type="entry name" value="Kinase-like_dom_sf"/>
</dbReference>
<dbReference type="InterPro" id="IPR000719">
    <property type="entry name" value="Prot_kinase_dom"/>
</dbReference>
<dbReference type="InterPro" id="IPR017441">
    <property type="entry name" value="Protein_kinase_ATP_BS"/>
</dbReference>
<dbReference type="InterPro" id="IPR001245">
    <property type="entry name" value="Ser-Thr/Tyr_kinase_cat_dom"/>
</dbReference>
<dbReference type="PANTHER" id="PTHR24173">
    <property type="entry name" value="ANKYRIN REPEAT CONTAINING"/>
    <property type="match status" value="1"/>
</dbReference>
<dbReference type="PANTHER" id="PTHR24173:SF74">
    <property type="entry name" value="ANKYRIN REPEAT DOMAIN-CONTAINING PROTEIN 16"/>
    <property type="match status" value="1"/>
</dbReference>
<dbReference type="Pfam" id="PF00023">
    <property type="entry name" value="Ank"/>
    <property type="match status" value="1"/>
</dbReference>
<dbReference type="Pfam" id="PF12796">
    <property type="entry name" value="Ank_2"/>
    <property type="match status" value="3"/>
</dbReference>
<dbReference type="Pfam" id="PF07714">
    <property type="entry name" value="PK_Tyr_Ser-Thr"/>
    <property type="match status" value="1"/>
</dbReference>
<dbReference type="PRINTS" id="PR01415">
    <property type="entry name" value="ANKYRIN"/>
</dbReference>
<dbReference type="SMART" id="SM00248">
    <property type="entry name" value="ANK"/>
    <property type="match status" value="10"/>
</dbReference>
<dbReference type="SUPFAM" id="SSF48403">
    <property type="entry name" value="Ankyrin repeat"/>
    <property type="match status" value="1"/>
</dbReference>
<dbReference type="SUPFAM" id="SSF56112">
    <property type="entry name" value="Protein kinase-like (PK-like)"/>
    <property type="match status" value="1"/>
</dbReference>
<dbReference type="PROSITE" id="PS50297">
    <property type="entry name" value="ANK_REP_REGION"/>
    <property type="match status" value="1"/>
</dbReference>
<dbReference type="PROSITE" id="PS50088">
    <property type="entry name" value="ANK_REPEAT"/>
    <property type="match status" value="6"/>
</dbReference>
<dbReference type="PROSITE" id="PS00107">
    <property type="entry name" value="PROTEIN_KINASE_ATP"/>
    <property type="match status" value="1"/>
</dbReference>
<dbReference type="PROSITE" id="PS50011">
    <property type="entry name" value="PROTEIN_KINASE_DOM"/>
    <property type="match status" value="1"/>
</dbReference>
<comment type="function">
    <text evidence="2">May play a role in cardiac physiology.</text>
</comment>
<comment type="catalytic activity">
    <reaction evidence="2">
        <text>L-seryl-[protein] + ATP = O-phospho-L-seryl-[protein] + ADP + H(+)</text>
        <dbReference type="Rhea" id="RHEA:17989"/>
        <dbReference type="Rhea" id="RHEA-COMP:9863"/>
        <dbReference type="Rhea" id="RHEA-COMP:11604"/>
        <dbReference type="ChEBI" id="CHEBI:15378"/>
        <dbReference type="ChEBI" id="CHEBI:29999"/>
        <dbReference type="ChEBI" id="CHEBI:30616"/>
        <dbReference type="ChEBI" id="CHEBI:83421"/>
        <dbReference type="ChEBI" id="CHEBI:456216"/>
        <dbReference type="EC" id="2.7.11.1"/>
    </reaction>
</comment>
<comment type="catalytic activity">
    <reaction evidence="2">
        <text>L-threonyl-[protein] + ATP = O-phospho-L-threonyl-[protein] + ADP + H(+)</text>
        <dbReference type="Rhea" id="RHEA:46608"/>
        <dbReference type="Rhea" id="RHEA-COMP:11060"/>
        <dbReference type="Rhea" id="RHEA-COMP:11605"/>
        <dbReference type="ChEBI" id="CHEBI:15378"/>
        <dbReference type="ChEBI" id="CHEBI:30013"/>
        <dbReference type="ChEBI" id="CHEBI:30616"/>
        <dbReference type="ChEBI" id="CHEBI:61977"/>
        <dbReference type="ChEBI" id="CHEBI:456216"/>
        <dbReference type="EC" id="2.7.11.1"/>
    </reaction>
</comment>
<comment type="cofactor">
    <cofactor evidence="2">
        <name>Mg(2+)</name>
        <dbReference type="ChEBI" id="CHEBI:18420"/>
    </cofactor>
</comment>
<comment type="subunit">
    <text evidence="1">Interacts with TNNI3, ACTC, ACTA1, MYBPC3, AIP, FABP3 and HADHB.</text>
</comment>
<comment type="subcellular location">
    <subcellularLocation>
        <location evidence="1">Nucleus</location>
    </subcellularLocation>
    <subcellularLocation>
        <location evidence="1">Cytoplasm</location>
    </subcellularLocation>
    <text evidence="1">Expressed at lower levels in the cytoplasm.</text>
</comment>
<comment type="PTM">
    <text evidence="2">Autophosphorylated.</text>
</comment>
<comment type="similarity">
    <text evidence="5">Belongs to the protein kinase superfamily. TKL Ser/Thr protein kinase family. MAP kinase kinase kinase subfamily.</text>
</comment>
<keyword id="KW-0040">ANK repeat</keyword>
<keyword id="KW-0067">ATP-binding</keyword>
<keyword id="KW-0175">Coiled coil</keyword>
<keyword id="KW-0963">Cytoplasm</keyword>
<keyword id="KW-0418">Kinase</keyword>
<keyword id="KW-0449">Lipoprotein</keyword>
<keyword id="KW-0460">Magnesium</keyword>
<keyword id="KW-0479">Metal-binding</keyword>
<keyword id="KW-0519">Myristate</keyword>
<keyword id="KW-0547">Nucleotide-binding</keyword>
<keyword id="KW-0539">Nucleus</keyword>
<keyword id="KW-0597">Phosphoprotein</keyword>
<keyword id="KW-1185">Reference proteome</keyword>
<keyword id="KW-0677">Repeat</keyword>
<keyword id="KW-0723">Serine/threonine-protein kinase</keyword>
<keyword id="KW-0808">Transferase</keyword>
<protein>
    <recommendedName>
        <fullName>Serine/threonine-protein kinase TNNI3K</fullName>
        <ecNumber>2.7.11.1</ecNumber>
    </recommendedName>
    <alternativeName>
        <fullName>TNNI3-interacting kinase</fullName>
    </alternativeName>
</protein>
<reference evidence="6" key="1">
    <citation type="submission" date="2004-11" db="EMBL/GenBank/DDBJ databases">
        <authorList>
            <consortium name="The German cDNA consortium"/>
        </authorList>
    </citation>
    <scope>NUCLEOTIDE SEQUENCE [LARGE SCALE MRNA]</scope>
    <source>
        <tissue evidence="6">Heart</tissue>
    </source>
</reference>
<sequence length="618" mass="68942">MGNYKSRPTQTCTDEWKKKVSESYVITIERLEDDLKIKEKELTELRNIFGSDEAFSKVNLNYHTENGLSLLHLCCICGGNKSHIRTLMLKGLRPSRLTRNGFTALHLAVYKDNAELITSLLHGGADIQQVGYGGLTALHIATIAGHLEAADVLLQHGANVNIQDAVFFTPLHIAAYYGHEQVTRLLLKFGADVNVSGEVGDRPLHLASAKGFLNIAKLLMEEGSKADVNAQDNEDHVPLHFCSRFGHHDIVKYLLQNDLEVQPHVVNIYGDTPLHLACYNGKFEVAKEIIQISGTESLTKENIFSETAFHSACTYGKSIDLVKFLLDQNVININHQGRDGHTGLHSACYHGHIHLVQFLLDNGADMNLVACDPSRSSGEKDEQTCLMWAYEKGHDAIVTLLKHYKRPQDELPCNEYSQPGGDGSYVSVPSPLGKIKSMTKEKADILLLRAGLPSHFHLQLSEIEFHEIIGSGSFGKVYKGRCRNKIVAIKRYRANTYCSKSDVDMFCREVSILCQLNHPCVIQFVGACLNDPSQFAIVTQYISGGSLFSLLHEQKRILDLQSKLIIAVDVARGMEYLHNLTQPIIHRDLNRSLKYLSAFCCCPNHLFLTAHTIYLLAP</sequence>
<organism>
    <name type="scientific">Pongo abelii</name>
    <name type="common">Sumatran orangutan</name>
    <name type="synonym">Pongo pygmaeus abelii</name>
    <dbReference type="NCBI Taxonomy" id="9601"/>
    <lineage>
        <taxon>Eukaryota</taxon>
        <taxon>Metazoa</taxon>
        <taxon>Chordata</taxon>
        <taxon>Craniata</taxon>
        <taxon>Vertebrata</taxon>
        <taxon>Euteleostomi</taxon>
        <taxon>Mammalia</taxon>
        <taxon>Eutheria</taxon>
        <taxon>Euarchontoglires</taxon>
        <taxon>Primates</taxon>
        <taxon>Haplorrhini</taxon>
        <taxon>Catarrhini</taxon>
        <taxon>Hominidae</taxon>
        <taxon>Pongo</taxon>
    </lineage>
</organism>
<name>TNI3K_PONAB</name>
<evidence type="ECO:0000250" key="1"/>
<evidence type="ECO:0000250" key="2">
    <source>
        <dbReference type="UniProtKB" id="Q59H18"/>
    </source>
</evidence>
<evidence type="ECO:0000255" key="3"/>
<evidence type="ECO:0000255" key="4">
    <source>
        <dbReference type="PROSITE-ProRule" id="PRU00159"/>
    </source>
</evidence>
<evidence type="ECO:0000305" key="5"/>
<evidence type="ECO:0000312" key="6">
    <source>
        <dbReference type="EMBL" id="CAH89642.1"/>
    </source>
</evidence>
<accession>Q5RF15</accession>
<gene>
    <name evidence="2" type="primary">TNNI3K</name>
</gene>